<gene>
    <name type="primary">dtymk</name>
    <name type="synonym">tymk</name>
    <name type="ORF">zgc:123174</name>
</gene>
<proteinExistence type="evidence at transcript level"/>
<name>KTHY_DANRE</name>
<evidence type="ECO:0000250" key="1">
    <source>
        <dbReference type="UniProtKB" id="P23919"/>
    </source>
</evidence>
<evidence type="ECO:0000269" key="2">
    <source>
    </source>
</evidence>
<evidence type="ECO:0000305" key="3"/>
<protein>
    <recommendedName>
        <fullName>Thymidylate kinase</fullName>
        <ecNumber evidence="1">2.7.4.9</ecNumber>
    </recommendedName>
    <alternativeName>
        <fullName>dTMP kinase</fullName>
    </alternativeName>
</protein>
<keyword id="KW-0067">ATP-binding</keyword>
<keyword id="KW-0418">Kinase</keyword>
<keyword id="KW-0545">Nucleotide biosynthesis</keyword>
<keyword id="KW-0547">Nucleotide-binding</keyword>
<keyword id="KW-1185">Reference proteome</keyword>
<keyword id="KW-0808">Transferase</keyword>
<organism>
    <name type="scientific">Danio rerio</name>
    <name type="common">Zebrafish</name>
    <name type="synonym">Brachydanio rerio</name>
    <dbReference type="NCBI Taxonomy" id="7955"/>
    <lineage>
        <taxon>Eukaryota</taxon>
        <taxon>Metazoa</taxon>
        <taxon>Chordata</taxon>
        <taxon>Craniata</taxon>
        <taxon>Vertebrata</taxon>
        <taxon>Euteleostomi</taxon>
        <taxon>Actinopterygii</taxon>
        <taxon>Neopterygii</taxon>
        <taxon>Teleostei</taxon>
        <taxon>Ostariophysi</taxon>
        <taxon>Cypriniformes</taxon>
        <taxon>Danionidae</taxon>
        <taxon>Danioninae</taxon>
        <taxon>Danio</taxon>
    </lineage>
</organism>
<comment type="function">
    <text evidence="1">Catalyzes the phosphorylation of thymidine monophosphate (dTMP) to thymidine diphosphate (dTDP), the immediate precursor for the DNA building block dTTP, with ATP as the preferred phosphoryl donor in the presence of Mg(2+).</text>
</comment>
<comment type="catalytic activity">
    <reaction evidence="1">
        <text>dTMP + ATP = dTDP + ADP</text>
        <dbReference type="Rhea" id="RHEA:13517"/>
        <dbReference type="ChEBI" id="CHEBI:30616"/>
        <dbReference type="ChEBI" id="CHEBI:58369"/>
        <dbReference type="ChEBI" id="CHEBI:63528"/>
        <dbReference type="ChEBI" id="CHEBI:456216"/>
        <dbReference type="EC" id="2.7.4.9"/>
    </reaction>
</comment>
<comment type="cofactor">
    <cofactor evidence="1">
        <name>Mg(2+)</name>
        <dbReference type="ChEBI" id="CHEBI:18420"/>
    </cofactor>
</comment>
<comment type="pathway">
    <text evidence="1">Pyrimidine metabolism; dTTP biosynthesis.</text>
</comment>
<comment type="disruption phenotype">
    <text evidence="2">The number of knockout embryos is obtained at the expected rate. Knockout embryos show microcephaly, neuronal cell death and early lethality. At 2 days post fertilization (dpf), forebrains in knockout animals exhibit higher amounts of apoptotic cells than control embryos. The head size is significantly smaller compared to sibling embryos of the same batch. From 3 dpf onwards, mutant embryos show markedly smaller eyes and prominent pericardiac edema. At 3 dpf, mutant embryos show twitching movements, reminiscent of epileptic seizures. In the brain, empty spaces, indicative of neurodegeneration, are apparent. Cartilage structures of the lower jaw (Meckels' cartilage) are absent in the mutant larvae. Severe underdevelopment of the eyes is prominent. The eyes of mutant embryos are smaller, have an irregular shape and only show the retinal pigmented epithelium (RPE) and photoreceptorlayer (PRL), whereas the other 4 layers are absent. From 4 dpf onwards, mutant embryos develop prominent edema of the brain and around the intestine. At 5 dpf, more than 40% of mutant embryos die.</text>
</comment>
<comment type="similarity">
    <text evidence="3">Belongs to the thymidylate kinase family.</text>
</comment>
<dbReference type="EC" id="2.7.4.9" evidence="1"/>
<dbReference type="EMBL" id="CU467043">
    <property type="status" value="NOT_ANNOTATED_CDS"/>
    <property type="molecule type" value="Genomic_DNA"/>
</dbReference>
<dbReference type="EMBL" id="BC107815">
    <property type="protein sequence ID" value="AAI07816.1"/>
    <property type="molecule type" value="mRNA"/>
</dbReference>
<dbReference type="RefSeq" id="NP_001032187.1">
    <property type="nucleotide sequence ID" value="NM_001037110.1"/>
</dbReference>
<dbReference type="SMR" id="Q3B752"/>
<dbReference type="FunCoup" id="Q3B752">
    <property type="interactions" value="1629"/>
</dbReference>
<dbReference type="STRING" id="7955.ENSDARP00000068373"/>
<dbReference type="PaxDb" id="7955-ENSDARP00000068373"/>
<dbReference type="Ensembl" id="ENSDART00000073883">
    <property type="protein sequence ID" value="ENSDARP00000068373"/>
    <property type="gene ID" value="ENSDARG00000052103"/>
</dbReference>
<dbReference type="GeneID" id="567734"/>
<dbReference type="KEGG" id="dre:567734"/>
<dbReference type="AGR" id="ZFIN:ZDB-GENE-990603-11"/>
<dbReference type="CTD" id="1841"/>
<dbReference type="ZFIN" id="ZDB-GENE-990603-11">
    <property type="gene designation" value="dtymk"/>
</dbReference>
<dbReference type="eggNOG" id="KOG3327">
    <property type="taxonomic scope" value="Eukaryota"/>
</dbReference>
<dbReference type="HOGENOM" id="CLU_049131_3_3_1"/>
<dbReference type="InParanoid" id="Q3B752"/>
<dbReference type="OMA" id="YWHQFDA"/>
<dbReference type="OrthoDB" id="425602at2759"/>
<dbReference type="TreeFam" id="TF324638"/>
<dbReference type="Reactome" id="R-DRE-499943">
    <property type="pathway name" value="Interconversion of nucleotide di- and triphosphates"/>
</dbReference>
<dbReference type="UniPathway" id="UPA00575"/>
<dbReference type="PRO" id="PR:Q3B752"/>
<dbReference type="Proteomes" id="UP000000437">
    <property type="component" value="Chromosome 6"/>
</dbReference>
<dbReference type="Bgee" id="ENSDARG00000052103">
    <property type="expression patterns" value="Expressed in mature ovarian follicle and 21 other cell types or tissues"/>
</dbReference>
<dbReference type="GO" id="GO:0005737">
    <property type="term" value="C:cytoplasm"/>
    <property type="evidence" value="ECO:0000318"/>
    <property type="project" value="GO_Central"/>
</dbReference>
<dbReference type="GO" id="GO:0005739">
    <property type="term" value="C:mitochondrion"/>
    <property type="evidence" value="ECO:0000318"/>
    <property type="project" value="GO_Central"/>
</dbReference>
<dbReference type="GO" id="GO:0005634">
    <property type="term" value="C:nucleus"/>
    <property type="evidence" value="ECO:0000318"/>
    <property type="project" value="GO_Central"/>
</dbReference>
<dbReference type="GO" id="GO:0005524">
    <property type="term" value="F:ATP binding"/>
    <property type="evidence" value="ECO:0007669"/>
    <property type="project" value="UniProtKB-KW"/>
</dbReference>
<dbReference type="GO" id="GO:0004798">
    <property type="term" value="F:dTMP kinase activity"/>
    <property type="evidence" value="ECO:0000318"/>
    <property type="project" value="GO_Central"/>
</dbReference>
<dbReference type="GO" id="GO:0004550">
    <property type="term" value="F:nucleoside diphosphate kinase activity"/>
    <property type="evidence" value="ECO:0000318"/>
    <property type="project" value="GO_Central"/>
</dbReference>
<dbReference type="GO" id="GO:0021954">
    <property type="term" value="P:central nervous system neuron development"/>
    <property type="evidence" value="ECO:0000315"/>
    <property type="project" value="ZFIN"/>
</dbReference>
<dbReference type="GO" id="GO:0006281">
    <property type="term" value="P:DNA repair"/>
    <property type="evidence" value="ECO:0000315"/>
    <property type="project" value="ZFIN"/>
</dbReference>
<dbReference type="GO" id="GO:0006233">
    <property type="term" value="P:dTDP biosynthetic process"/>
    <property type="evidence" value="ECO:0000318"/>
    <property type="project" value="GO_Central"/>
</dbReference>
<dbReference type="GO" id="GO:0006235">
    <property type="term" value="P:dTTP biosynthetic process"/>
    <property type="evidence" value="ECO:0000318"/>
    <property type="project" value="GO_Central"/>
</dbReference>
<dbReference type="GO" id="GO:0006227">
    <property type="term" value="P:dUDP biosynthetic process"/>
    <property type="evidence" value="ECO:0000318"/>
    <property type="project" value="GO_Central"/>
</dbReference>
<dbReference type="CDD" id="cd01672">
    <property type="entry name" value="TMPK"/>
    <property type="match status" value="1"/>
</dbReference>
<dbReference type="FunFam" id="3.40.50.300:FF:000679">
    <property type="entry name" value="Thymidylate kinase"/>
    <property type="match status" value="1"/>
</dbReference>
<dbReference type="Gene3D" id="3.40.50.300">
    <property type="entry name" value="P-loop containing nucleotide triphosphate hydrolases"/>
    <property type="match status" value="1"/>
</dbReference>
<dbReference type="HAMAP" id="MF_00165">
    <property type="entry name" value="Thymidylate_kinase"/>
    <property type="match status" value="1"/>
</dbReference>
<dbReference type="InterPro" id="IPR027417">
    <property type="entry name" value="P-loop_NTPase"/>
</dbReference>
<dbReference type="InterPro" id="IPR039430">
    <property type="entry name" value="Thymidylate_kin-like_dom"/>
</dbReference>
<dbReference type="InterPro" id="IPR018095">
    <property type="entry name" value="Thymidylate_kin_CS"/>
</dbReference>
<dbReference type="InterPro" id="IPR018094">
    <property type="entry name" value="Thymidylate_kinase"/>
</dbReference>
<dbReference type="NCBIfam" id="TIGR00041">
    <property type="entry name" value="DTMP_kinase"/>
    <property type="match status" value="1"/>
</dbReference>
<dbReference type="PANTHER" id="PTHR10344">
    <property type="entry name" value="THYMIDYLATE KINASE"/>
    <property type="match status" value="1"/>
</dbReference>
<dbReference type="PANTHER" id="PTHR10344:SF1">
    <property type="entry name" value="THYMIDYLATE KINASE"/>
    <property type="match status" value="1"/>
</dbReference>
<dbReference type="Pfam" id="PF02223">
    <property type="entry name" value="Thymidylate_kin"/>
    <property type="match status" value="1"/>
</dbReference>
<dbReference type="SUPFAM" id="SSF52540">
    <property type="entry name" value="P-loop containing nucleoside triphosphate hydrolases"/>
    <property type="match status" value="1"/>
</dbReference>
<dbReference type="PROSITE" id="PS01331">
    <property type="entry name" value="THYMIDYLATE_KINASE"/>
    <property type="match status" value="1"/>
</dbReference>
<accession>Q3B752</accession>
<accession>A0A8M1N855</accession>
<feature type="chain" id="PRO_0000456892" description="Thymidylate kinase">
    <location>
        <begin position="1"/>
        <end position="212"/>
    </location>
</feature>
<feature type="binding site" evidence="1">
    <location>
        <begin position="16"/>
        <end position="21"/>
    </location>
    <ligand>
        <name>ATP</name>
        <dbReference type="ChEBI" id="CHEBI:30616"/>
    </ligand>
</feature>
<feature type="binding site" evidence="1">
    <location>
        <position position="97"/>
    </location>
    <ligand>
        <name>ATP</name>
        <dbReference type="ChEBI" id="CHEBI:30616"/>
    </ligand>
</feature>
<feature type="binding site" evidence="1">
    <location>
        <position position="182"/>
    </location>
    <ligand>
        <name>ATP</name>
        <dbReference type="ChEBI" id="CHEBI:30616"/>
    </ligand>
</feature>
<feature type="binding site" evidence="1">
    <location>
        <position position="192"/>
    </location>
    <ligand>
        <name>ATP</name>
        <dbReference type="ChEBI" id="CHEBI:30616"/>
    </ligand>
</feature>
<reference key="1">
    <citation type="journal article" date="2013" name="Nature">
        <title>The zebrafish reference genome sequence and its relationship to the human genome.</title>
        <authorList>
            <person name="Howe K."/>
            <person name="Clark M.D."/>
            <person name="Torroja C.F."/>
            <person name="Torrance J."/>
            <person name="Berthelot C."/>
            <person name="Muffato M."/>
            <person name="Collins J.E."/>
            <person name="Humphray S."/>
            <person name="McLaren K."/>
            <person name="Matthews L."/>
            <person name="McLaren S."/>
            <person name="Sealy I."/>
            <person name="Caccamo M."/>
            <person name="Churcher C."/>
            <person name="Scott C."/>
            <person name="Barrett J.C."/>
            <person name="Koch R."/>
            <person name="Rauch G.J."/>
            <person name="White S."/>
            <person name="Chow W."/>
            <person name="Kilian B."/>
            <person name="Quintais L.T."/>
            <person name="Guerra-Assuncao J.A."/>
            <person name="Zhou Y."/>
            <person name="Gu Y."/>
            <person name="Yen J."/>
            <person name="Vogel J.H."/>
            <person name="Eyre T."/>
            <person name="Redmond S."/>
            <person name="Banerjee R."/>
            <person name="Chi J."/>
            <person name="Fu B."/>
            <person name="Langley E."/>
            <person name="Maguire S.F."/>
            <person name="Laird G.K."/>
            <person name="Lloyd D."/>
            <person name="Kenyon E."/>
            <person name="Donaldson S."/>
            <person name="Sehra H."/>
            <person name="Almeida-King J."/>
            <person name="Loveland J."/>
            <person name="Trevanion S."/>
            <person name="Jones M."/>
            <person name="Quail M."/>
            <person name="Willey D."/>
            <person name="Hunt A."/>
            <person name="Burton J."/>
            <person name="Sims S."/>
            <person name="McLay K."/>
            <person name="Plumb B."/>
            <person name="Davis J."/>
            <person name="Clee C."/>
            <person name="Oliver K."/>
            <person name="Clark R."/>
            <person name="Riddle C."/>
            <person name="Elliot D."/>
            <person name="Threadgold G."/>
            <person name="Harden G."/>
            <person name="Ware D."/>
            <person name="Begum S."/>
            <person name="Mortimore B."/>
            <person name="Kerry G."/>
            <person name="Heath P."/>
            <person name="Phillimore B."/>
            <person name="Tracey A."/>
            <person name="Corby N."/>
            <person name="Dunn M."/>
            <person name="Johnson C."/>
            <person name="Wood J."/>
            <person name="Clark S."/>
            <person name="Pelan S."/>
            <person name="Griffiths G."/>
            <person name="Smith M."/>
            <person name="Glithero R."/>
            <person name="Howden P."/>
            <person name="Barker N."/>
            <person name="Lloyd C."/>
            <person name="Stevens C."/>
            <person name="Harley J."/>
            <person name="Holt K."/>
            <person name="Panagiotidis G."/>
            <person name="Lovell J."/>
            <person name="Beasley H."/>
            <person name="Henderson C."/>
            <person name="Gordon D."/>
            <person name="Auger K."/>
            <person name="Wright D."/>
            <person name="Collins J."/>
            <person name="Raisen C."/>
            <person name="Dyer L."/>
            <person name="Leung K."/>
            <person name="Robertson L."/>
            <person name="Ambridge K."/>
            <person name="Leongamornlert D."/>
            <person name="McGuire S."/>
            <person name="Gilderthorp R."/>
            <person name="Griffiths C."/>
            <person name="Manthravadi D."/>
            <person name="Nichol S."/>
            <person name="Barker G."/>
            <person name="Whitehead S."/>
            <person name="Kay M."/>
            <person name="Brown J."/>
            <person name="Murnane C."/>
            <person name="Gray E."/>
            <person name="Humphries M."/>
            <person name="Sycamore N."/>
            <person name="Barker D."/>
            <person name="Saunders D."/>
            <person name="Wallis J."/>
            <person name="Babbage A."/>
            <person name="Hammond S."/>
            <person name="Mashreghi-Mohammadi M."/>
            <person name="Barr L."/>
            <person name="Martin S."/>
            <person name="Wray P."/>
            <person name="Ellington A."/>
            <person name="Matthews N."/>
            <person name="Ellwood M."/>
            <person name="Woodmansey R."/>
            <person name="Clark G."/>
            <person name="Cooper J."/>
            <person name="Tromans A."/>
            <person name="Grafham D."/>
            <person name="Skuce C."/>
            <person name="Pandian R."/>
            <person name="Andrews R."/>
            <person name="Harrison E."/>
            <person name="Kimberley A."/>
            <person name="Garnett J."/>
            <person name="Fosker N."/>
            <person name="Hall R."/>
            <person name="Garner P."/>
            <person name="Kelly D."/>
            <person name="Bird C."/>
            <person name="Palmer S."/>
            <person name="Gehring I."/>
            <person name="Berger A."/>
            <person name="Dooley C.M."/>
            <person name="Ersan-Urun Z."/>
            <person name="Eser C."/>
            <person name="Geiger H."/>
            <person name="Geisler M."/>
            <person name="Karotki L."/>
            <person name="Kirn A."/>
            <person name="Konantz J."/>
            <person name="Konantz M."/>
            <person name="Oberlander M."/>
            <person name="Rudolph-Geiger S."/>
            <person name="Teucke M."/>
            <person name="Lanz C."/>
            <person name="Raddatz G."/>
            <person name="Osoegawa K."/>
            <person name="Zhu B."/>
            <person name="Rapp A."/>
            <person name="Widaa S."/>
            <person name="Langford C."/>
            <person name="Yang F."/>
            <person name="Schuster S.C."/>
            <person name="Carter N.P."/>
            <person name="Harrow J."/>
            <person name="Ning Z."/>
            <person name="Herrero J."/>
            <person name="Searle S.M."/>
            <person name="Enright A."/>
            <person name="Geisler R."/>
            <person name="Plasterk R.H."/>
            <person name="Lee C."/>
            <person name="Westerfield M."/>
            <person name="de Jong P.J."/>
            <person name="Zon L.I."/>
            <person name="Postlethwait J.H."/>
            <person name="Nusslein-Volhard C."/>
            <person name="Hubbard T.J."/>
            <person name="Roest Crollius H."/>
            <person name="Rogers J."/>
            <person name="Stemple D.L."/>
        </authorList>
    </citation>
    <scope>NUCLEOTIDE SEQUENCE [LARGE SCALE GENOMIC DNA]</scope>
    <source>
        <strain>Tuebingen</strain>
    </source>
</reference>
<reference key="2">
    <citation type="submission" date="2005-10" db="EMBL/GenBank/DDBJ databases">
        <authorList>
            <consortium name="NIH - Zebrafish Gene Collection (ZGC) project"/>
        </authorList>
    </citation>
    <scope>NUCLEOTIDE SEQUENCE [LARGE SCALE MRNA]</scope>
    <source>
        <tissue>Embryo</tissue>
    </source>
</reference>
<reference key="3">
    <citation type="journal article" date="2022" name="Acta Neuropathol.">
        <title>DTYMK is essential for genome integrity and neuronal survival.</title>
        <authorList>
            <person name="Vanoevelen J.M."/>
            <person name="Bierau J."/>
            <person name="Grashorn J.C."/>
            <person name="Lambrichs E."/>
            <person name="Kamsteeg E.J."/>
            <person name="Bok L.A."/>
            <person name="Wevers R.A."/>
            <person name="van der Knaap M.S."/>
            <person name="Bugiani M."/>
            <person name="Frisk J.H."/>
            <person name="Colnaghi R."/>
            <person name="O'Driscoll M."/>
            <person name="Hellebrekers D.M.E.I."/>
            <person name="Rodenburg R."/>
            <person name="Ferreira C.R."/>
            <person name="Brunner H.G."/>
            <person name="van den Wijngaard A."/>
            <person name="Abdel-Salam G.M.H."/>
            <person name="Wang L."/>
            <person name="Stumpel C.T.R.M."/>
        </authorList>
    </citation>
    <scope>DISRUPTION PHENOTYPE</scope>
</reference>
<sequence length="212" mass="24133">MSCRRGALIVLEGVDRAGKTTQCQKLVQAIQQSGRAAEIMRFPDRTTKIGQLISSYLEKKSNLEDHTVHLLFSANRWEMVPVMKQKLEEGINLVVDRYAFSGVAFTSAKPGFSLEWCMNPDVGLPKPDLVMFLQLNPNVAANRGEYGNERYETSAFQRTVQQRFEELMQDTSINWKVIDAARTIEEVHKDIKDLSENIISLAEEQPVGELWR</sequence>